<dbReference type="EMBL" id="FN315080">
    <property type="protein sequence ID" value="CAX70812.1"/>
    <property type="molecule type" value="mRNA"/>
</dbReference>
<dbReference type="EMBL" id="FN315082">
    <property type="protein sequence ID" value="CAX70814.1"/>
    <property type="molecule type" value="mRNA"/>
</dbReference>
<dbReference type="SMR" id="C1L7Y4"/>
<dbReference type="GO" id="GO:0005737">
    <property type="term" value="C:cytoplasm"/>
    <property type="evidence" value="ECO:0007669"/>
    <property type="project" value="TreeGrafter"/>
</dbReference>
<dbReference type="GO" id="GO:0070062">
    <property type="term" value="C:extracellular exosome"/>
    <property type="evidence" value="ECO:0000314"/>
    <property type="project" value="UniProtKB"/>
</dbReference>
<dbReference type="GO" id="GO:0043657">
    <property type="term" value="C:host cell"/>
    <property type="evidence" value="ECO:0000314"/>
    <property type="project" value="UniProtKB"/>
</dbReference>
<dbReference type="GO" id="GO:0016020">
    <property type="term" value="C:membrane"/>
    <property type="evidence" value="ECO:0000250"/>
    <property type="project" value="UniProtKB"/>
</dbReference>
<dbReference type="GO" id="GO:0005634">
    <property type="term" value="C:nucleus"/>
    <property type="evidence" value="ECO:0007669"/>
    <property type="project" value="TreeGrafter"/>
</dbReference>
<dbReference type="GO" id="GO:0005886">
    <property type="term" value="C:plasma membrane"/>
    <property type="evidence" value="ECO:0007669"/>
    <property type="project" value="TreeGrafter"/>
</dbReference>
<dbReference type="GO" id="GO:0012506">
    <property type="term" value="C:vesicle membrane"/>
    <property type="evidence" value="ECO:0007669"/>
    <property type="project" value="TreeGrafter"/>
</dbReference>
<dbReference type="GO" id="GO:0005509">
    <property type="term" value="F:calcium ion binding"/>
    <property type="evidence" value="ECO:0000250"/>
    <property type="project" value="UniProtKB"/>
</dbReference>
<dbReference type="GO" id="GO:0005544">
    <property type="term" value="F:calcium-dependent phospholipid binding"/>
    <property type="evidence" value="ECO:0000250"/>
    <property type="project" value="UniProtKB"/>
</dbReference>
<dbReference type="GO" id="GO:0042802">
    <property type="term" value="F:identical protein binding"/>
    <property type="evidence" value="ECO:0000250"/>
    <property type="project" value="UniProtKB"/>
</dbReference>
<dbReference type="GO" id="GO:0001786">
    <property type="term" value="F:phosphatidylserine binding"/>
    <property type="evidence" value="ECO:0007669"/>
    <property type="project" value="TreeGrafter"/>
</dbReference>
<dbReference type="GO" id="GO:0042803">
    <property type="term" value="F:protein homodimerization activity"/>
    <property type="evidence" value="ECO:0000250"/>
    <property type="project" value="UniProtKB"/>
</dbReference>
<dbReference type="GO" id="GO:0007292">
    <property type="term" value="P:female gamete generation"/>
    <property type="evidence" value="ECO:0000315"/>
    <property type="project" value="UniProtKB"/>
</dbReference>
<dbReference type="FunFam" id="1.10.220.10:FF:000001">
    <property type="entry name" value="Annexin"/>
    <property type="match status" value="1"/>
</dbReference>
<dbReference type="FunFam" id="1.10.220.10:FF:000002">
    <property type="entry name" value="Annexin"/>
    <property type="match status" value="1"/>
</dbReference>
<dbReference type="FunFam" id="1.10.220.10:FF:000005">
    <property type="entry name" value="Annexin"/>
    <property type="match status" value="2"/>
</dbReference>
<dbReference type="Gene3D" id="1.10.220.10">
    <property type="entry name" value="Annexin"/>
    <property type="match status" value="4"/>
</dbReference>
<dbReference type="InterPro" id="IPR001464">
    <property type="entry name" value="Annexin"/>
</dbReference>
<dbReference type="InterPro" id="IPR018502">
    <property type="entry name" value="Annexin_repeat"/>
</dbReference>
<dbReference type="InterPro" id="IPR018252">
    <property type="entry name" value="Annexin_repeat_CS"/>
</dbReference>
<dbReference type="InterPro" id="IPR037104">
    <property type="entry name" value="Annexin_sf"/>
</dbReference>
<dbReference type="PANTHER" id="PTHR10502">
    <property type="entry name" value="ANNEXIN"/>
    <property type="match status" value="1"/>
</dbReference>
<dbReference type="PANTHER" id="PTHR10502:SF102">
    <property type="entry name" value="ANNEXIN B11"/>
    <property type="match status" value="1"/>
</dbReference>
<dbReference type="Pfam" id="PF00191">
    <property type="entry name" value="Annexin"/>
    <property type="match status" value="4"/>
</dbReference>
<dbReference type="PRINTS" id="PR00196">
    <property type="entry name" value="ANNEXIN"/>
</dbReference>
<dbReference type="SMART" id="SM00335">
    <property type="entry name" value="ANX"/>
    <property type="match status" value="4"/>
</dbReference>
<dbReference type="SUPFAM" id="SSF47874">
    <property type="entry name" value="Annexin"/>
    <property type="match status" value="1"/>
</dbReference>
<dbReference type="PROSITE" id="PS00223">
    <property type="entry name" value="ANNEXIN_1"/>
    <property type="match status" value="1"/>
</dbReference>
<dbReference type="PROSITE" id="PS51897">
    <property type="entry name" value="ANNEXIN_2"/>
    <property type="match status" value="4"/>
</dbReference>
<name>ANX13_SCHJA</name>
<accession>C1L7Y4</accession>
<reference evidence="7 8" key="1">
    <citation type="journal article" date="2009" name="Nature">
        <title>The Schistosoma japonicum genome reveals features of host-parasite interplay.</title>
        <authorList>
            <consortium name="Schistosoma japonicum Genome Sequencing and Functional Analysis Consortium"/>
            <person name="Liu F."/>
            <person name="Zhou Y."/>
            <person name="Wang Z.Q."/>
            <person name="Lu G."/>
            <person name="Zheng H."/>
            <person name="Brindley P.J."/>
            <person name="McManus D.P."/>
            <person name="Blair D."/>
            <person name="Zhang Q.H."/>
            <person name="Zhong Y."/>
            <person name="Wang S."/>
            <person name="Han Z.G."/>
            <person name="Chen Z."/>
        </authorList>
    </citation>
    <scope>NUCLEOTIDE SEQUENCE [LARGE SCALE MRNA]</scope>
    <source>
        <strain evidence="7 8">Anhui / Chinese</strain>
    </source>
</reference>
<reference key="2">
    <citation type="journal article" date="2023" name="Vet. Res.">
        <title>Molecular and functional characterization of Schistosoma japonicum annexin A13.</title>
        <authorList>
            <person name="Zhong H."/>
            <person name="Hou L."/>
            <person name="Qin F."/>
            <person name="Ren Y."/>
            <person name="Dong B."/>
            <person name="Zhu D."/>
            <person name="Li H."/>
            <person name="Lu K."/>
            <person name="Fu Z."/>
            <person name="Liu J."/>
            <person name="Gu S."/>
            <person name="Jin Y."/>
        </authorList>
    </citation>
    <scope>FUNCTION</scope>
    <scope>SUBCELLULAR LOCATION</scope>
    <scope>DISRUPTION PHENOTYPE</scope>
    <scope>3D-STRUCTURE MODELING</scope>
    <source>
        <strain evidence="5">Anhui / Chinese</strain>
    </source>
</reference>
<feature type="chain" id="PRO_0000461197" description="Annexin A13">
    <location>
        <begin position="1"/>
        <end position="354"/>
    </location>
</feature>
<feature type="repeat" description="Annexin 1" evidence="2">
    <location>
        <begin position="26"/>
        <end position="97"/>
    </location>
</feature>
<feature type="repeat" description="Annexin 2" evidence="2">
    <location>
        <begin position="98"/>
        <end position="177"/>
    </location>
</feature>
<feature type="repeat" description="Annexin 3" evidence="2">
    <location>
        <begin position="203"/>
        <end position="275"/>
    </location>
</feature>
<feature type="repeat" description="Annexin 4" evidence="2">
    <location>
        <begin position="279"/>
        <end position="350"/>
    </location>
</feature>
<feature type="binding site" evidence="1">
    <location>
        <position position="39"/>
    </location>
    <ligand>
        <name>Ca(2+)</name>
        <dbReference type="ChEBI" id="CHEBI:29108"/>
        <label>1</label>
    </ligand>
</feature>
<feature type="binding site" evidence="1">
    <location>
        <position position="41"/>
    </location>
    <ligand>
        <name>Ca(2+)</name>
        <dbReference type="ChEBI" id="CHEBI:29108"/>
        <label>1</label>
    </ligand>
</feature>
<feature type="binding site" evidence="1">
    <location>
        <position position="43"/>
    </location>
    <ligand>
        <name>Ca(2+)</name>
        <dbReference type="ChEBI" id="CHEBI:29108"/>
        <label>1</label>
    </ligand>
</feature>
<feature type="binding site" evidence="1">
    <location>
        <position position="44"/>
    </location>
    <ligand>
        <name>Ca(2+)</name>
        <dbReference type="ChEBI" id="CHEBI:29108"/>
        <label>2</label>
    </ligand>
</feature>
<feature type="binding site" evidence="1">
    <location>
        <position position="46"/>
    </location>
    <ligand>
        <name>Ca(2+)</name>
        <dbReference type="ChEBI" id="CHEBI:29108"/>
        <label>2</label>
    </ligand>
</feature>
<feature type="binding site" evidence="1">
    <location>
        <position position="83"/>
    </location>
    <ligand>
        <name>Ca(2+)</name>
        <dbReference type="ChEBI" id="CHEBI:29108"/>
        <label>1</label>
    </ligand>
</feature>
<feature type="binding site" evidence="1">
    <location>
        <position position="111"/>
    </location>
    <ligand>
        <name>Ca(2+)</name>
        <dbReference type="ChEBI" id="CHEBI:29108"/>
        <label>3</label>
    </ligand>
</feature>
<feature type="binding site" evidence="1">
    <location>
        <position position="113"/>
    </location>
    <ligand>
        <name>Ca(2+)</name>
        <dbReference type="ChEBI" id="CHEBI:29108"/>
        <label>3</label>
    </ligand>
</feature>
<feature type="binding site" evidence="1">
    <location>
        <position position="115"/>
    </location>
    <ligand>
        <name>Ca(2+)</name>
        <dbReference type="ChEBI" id="CHEBI:29108"/>
        <label>3</label>
    </ligand>
</feature>
<feature type="binding site" evidence="1">
    <location>
        <position position="118"/>
    </location>
    <ligand>
        <name>Ca(2+)</name>
        <dbReference type="ChEBI" id="CHEBI:29108"/>
        <label>4</label>
    </ligand>
</feature>
<feature type="binding site" evidence="1">
    <location>
        <position position="163"/>
    </location>
    <ligand>
        <name>Ca(2+)</name>
        <dbReference type="ChEBI" id="CHEBI:29108"/>
        <label>3</label>
    </ligand>
</feature>
<feature type="binding site" evidence="1">
    <location>
        <position position="265"/>
    </location>
    <ligand>
        <name>Ca(2+)</name>
        <dbReference type="ChEBI" id="CHEBI:29108"/>
        <label>4</label>
    </ligand>
</feature>
<feature type="binding site" evidence="1">
    <location>
        <position position="292"/>
    </location>
    <ligand>
        <name>Ca(2+)</name>
        <dbReference type="ChEBI" id="CHEBI:29108"/>
        <label>5</label>
    </ligand>
</feature>
<feature type="binding site" evidence="1">
    <location>
        <position position="294"/>
    </location>
    <ligand>
        <name>Ca(2+)</name>
        <dbReference type="ChEBI" id="CHEBI:29108"/>
        <label>5</label>
    </ligand>
</feature>
<feature type="binding site" evidence="1">
    <location>
        <position position="295"/>
    </location>
    <ligand>
        <name>Ca(2+)</name>
        <dbReference type="ChEBI" id="CHEBI:29108"/>
        <label>5</label>
    </ligand>
</feature>
<feature type="binding site" evidence="1">
    <location>
        <position position="296"/>
    </location>
    <ligand>
        <name>Ca(2+)</name>
        <dbReference type="ChEBI" id="CHEBI:29108"/>
        <label>6</label>
    </ligand>
</feature>
<feature type="binding site" evidence="1">
    <location>
        <position position="336"/>
    </location>
    <ligand>
        <name>Ca(2+)</name>
        <dbReference type="ChEBI" id="CHEBI:29108"/>
        <label>5</label>
    </ligand>
</feature>
<feature type="binding site" evidence="1">
    <location>
        <position position="336"/>
    </location>
    <ligand>
        <name>Ca(2+)</name>
        <dbReference type="ChEBI" id="CHEBI:29108"/>
        <label>6</label>
    </ligand>
</feature>
<proteinExistence type="evidence at transcript level"/>
<organism evidence="7">
    <name type="scientific">Schistosoma japonicum</name>
    <name type="common">Blood fluke</name>
    <dbReference type="NCBI Taxonomy" id="6182"/>
    <lineage>
        <taxon>Eukaryota</taxon>
        <taxon>Metazoa</taxon>
        <taxon>Spiralia</taxon>
        <taxon>Lophotrochozoa</taxon>
        <taxon>Platyhelminthes</taxon>
        <taxon>Trematoda</taxon>
        <taxon>Digenea</taxon>
        <taxon>Strigeidida</taxon>
        <taxon>Schistosomatoidea</taxon>
        <taxon>Schistosomatidae</taxon>
        <taxon>Schistosoma</taxon>
    </lineage>
</organism>
<evidence type="ECO:0000250" key="1">
    <source>
        <dbReference type="UniProtKB" id="C4QH88"/>
    </source>
</evidence>
<evidence type="ECO:0000255" key="2">
    <source>
        <dbReference type="PROSITE-ProRule" id="PRU01245"/>
    </source>
</evidence>
<evidence type="ECO:0000255" key="3">
    <source>
        <dbReference type="RuleBase" id="RU003540"/>
    </source>
</evidence>
<evidence type="ECO:0000269" key="4">
    <source>
    </source>
</evidence>
<evidence type="ECO:0000303" key="5">
    <source>
    </source>
</evidence>
<evidence type="ECO:0000305" key="6">
    <source>
    </source>
</evidence>
<evidence type="ECO:0000312" key="7">
    <source>
        <dbReference type="EMBL" id="CAX70812.1"/>
    </source>
</evidence>
<evidence type="ECO:0000312" key="8">
    <source>
        <dbReference type="EMBL" id="CAX70814.1"/>
    </source>
</evidence>
<comment type="function">
    <text evidence="1 4">Involved in reproduction of the worm (PubMed:38049816). Involved in host-parasite interaction (PubMed:38049816). Delivered into the host cell by means of parasite exosomes (PubMed:38049816). Binds to acidic phospholipid membranes in a calcium-dependent manner in vitro (By similarity). Causes aggregation of liposomes in the presence of calcium, but not in its absence (By similarity). Likely to promote membrane fusion (By similarity). May provide structural integrity within the tegument (By similarity).</text>
</comment>
<comment type="subunit">
    <text evidence="1">Homodimer.</text>
</comment>
<comment type="subcellular location">
    <subcellularLocation>
        <location evidence="1">Tegument</location>
    </subcellularLocation>
    <subcellularLocation>
        <location evidence="4">Secreted</location>
        <location evidence="4">Extracellular exosome</location>
    </subcellularLocation>
    <subcellularLocation>
        <location evidence="4">Host cell</location>
    </subcellularLocation>
    <text evidence="1">Mainly locates on the cytoplasmic face of the dual membrane of the tegument. Associates with the apical plasma membrane and its derivatives including surface invaginations. Localizes to vesicular structures, such as the elongate bodies, and to muscle layer, within the tegument.</text>
</comment>
<comment type="domain">
    <text evidence="3">A pair of annexin repeats may form one binding site for calcium and phospholipid.</text>
</comment>
<comment type="disruption phenotype">
    <text evidence="4">RNAi-mediated knockdown of this protein causes no morphological changes on tegument structure except that the tegument surface appears smoother in some areas. Has a significant effect on worm development and egg production by female worms in vivo. Reduced number of eggs in female worms, reduced number of worms in infected mice, reduced number of eggs in the livers of infected mice, and reduced hatching of the mouse liver-harvested eggs into miracidia compared to wild-type.</text>
</comment>
<comment type="similarity">
    <text evidence="2 3">Belongs to the annexin family.</text>
</comment>
<comment type="caution">
    <text evidence="6">The nomenclature classifies invertebrate (including schistosomes) annexins as group B. However, there are inconsistencies to this naming system including this protein. It was originally named as group A (vertebrates) annexin, the name which is still currently maintained.</text>
</comment>
<protein>
    <recommendedName>
        <fullName evidence="5 7 8">Annexin A13</fullName>
    </recommendedName>
    <alternativeName>
        <fullName evidence="3">Annexin</fullName>
    </alternativeName>
    <alternativeName>
        <fullName evidence="7 8">Annexin XIII</fullName>
    </alternativeName>
    <alternativeName>
        <fullName evidence="5">SjANX A13</fullName>
    </alternativeName>
</protein>
<sequence length="354" mass="39609">MGRSKLQIIGPNGEIYQPTLKIQRNNDPNKDAEVLYEAMKGWGTNEDRIIGILGYRSSHQRIIIRDQFKALYGKDLITELSSETSGHFKKLLKMLLTDTDKMNARALYKAMKGGGTDESTIIEVLCTSSNCEIEDIKTAYQSVLKDYGISDPRRTLESDVEDDLSGPFKNLVIALLQAKREEIPFEIAEQIQSKGIKSVVDMNLVEQDVETLWDAGEARLGTDEAAIIKILVSRSVWHIQAIAQHFEKKYGKSLIDSLASETSGDFESALLLTLNTCLNRPKAYADLLLKAMKGLGTDDCTLMRIIVSRCELDLGSICQEFERSQGSSLEEWIRSETSGDYRKLLLALIGAEWS</sequence>
<keyword id="KW-0041">Annexin</keyword>
<keyword id="KW-0106">Calcium</keyword>
<keyword id="KW-0111">Calcium/phospholipid-binding</keyword>
<keyword id="KW-0479">Metal-binding</keyword>
<keyword id="KW-0677">Repeat</keyword>
<keyword id="KW-0964">Secreted</keyword>